<sequence>MFKVARASQYLAITGGGIEDIKLSKKSWVFPWQRCTVFDVSPVNYTFKVQAMSAEKLPFVLPAVFTIGPRVDDTEALILYARLISPHDKQSNHVNELVEGVIEGETRVLAASMTMEEIFKGTKEFKKEVFDKVQLELDQFGLVIYNANVKQLVDVPGHEYFSYLGQKTQMEAANQARIDVAEAKMKGEIGAKERTGLTLQNAAKIDAESKIISMQRQGEGTKAEIKVKTEVKVFENQKEADVAKANSELAMKKAAWTKDAKVAEVEATKAVALREAELQTQVEKMNALTRTEKLKAEFLSKASVEYETKVQEANWELYNKQKQAEAVLYEKQKQAEAQKAEADATFYSKQKEAEGLVALASAQGTYLRTLLDAVQNDYSCLRDFLMINNGTYQEIAKTNALAVRDLQPKISVWNHGGEQGIGGASGSGMKDIAGLYKMLPPVLDTVYEQTGMQPPAWIGTLSK</sequence>
<name>FLOT2_ARATH</name>
<gene>
    <name type="primary">FLOT2</name>
    <name type="ordered locus">At5g25260</name>
    <name type="ORF">F21J6.109</name>
</gene>
<evidence type="ECO:0000250" key="1"/>
<evidence type="ECO:0000255" key="2"/>
<evidence type="ECO:0000305" key="3"/>
<proteinExistence type="evidence at transcript level"/>
<comment type="function">
    <text evidence="1">May act as a scaffolding protein within caveolar membranes, functionally participating in formation of caveolae or caveolae-like vesicles.</text>
</comment>
<comment type="subcellular location">
    <subcellularLocation>
        <location evidence="3">Cell membrane</location>
        <topology evidence="3">Lipid-anchor</topology>
    </subcellularLocation>
    <subcellularLocation>
        <location evidence="1">Membrane</location>
        <location evidence="1">Caveola</location>
    </subcellularLocation>
</comment>
<comment type="PTM">
    <text evidence="3">May be palmitoylated.</text>
</comment>
<comment type="similarity">
    <text evidence="3">Belongs to the band 7/mec-2 family. Flotillin subfamily.</text>
</comment>
<organism>
    <name type="scientific">Arabidopsis thaliana</name>
    <name type="common">Mouse-ear cress</name>
    <dbReference type="NCBI Taxonomy" id="3702"/>
    <lineage>
        <taxon>Eukaryota</taxon>
        <taxon>Viridiplantae</taxon>
        <taxon>Streptophyta</taxon>
        <taxon>Embryophyta</taxon>
        <taxon>Tracheophyta</taxon>
        <taxon>Spermatophyta</taxon>
        <taxon>Magnoliopsida</taxon>
        <taxon>eudicotyledons</taxon>
        <taxon>Gunneridae</taxon>
        <taxon>Pentapetalae</taxon>
        <taxon>rosids</taxon>
        <taxon>malvids</taxon>
        <taxon>Brassicales</taxon>
        <taxon>Brassicaceae</taxon>
        <taxon>Camelineae</taxon>
        <taxon>Arabidopsis</taxon>
    </lineage>
</organism>
<reference key="1">
    <citation type="journal article" date="2000" name="Nature">
        <title>Sequence and analysis of chromosome 5 of the plant Arabidopsis thaliana.</title>
        <authorList>
            <person name="Tabata S."/>
            <person name="Kaneko T."/>
            <person name="Nakamura Y."/>
            <person name="Kotani H."/>
            <person name="Kato T."/>
            <person name="Asamizu E."/>
            <person name="Miyajima N."/>
            <person name="Sasamoto S."/>
            <person name="Kimura T."/>
            <person name="Hosouchi T."/>
            <person name="Kawashima K."/>
            <person name="Kohara M."/>
            <person name="Matsumoto M."/>
            <person name="Matsuno A."/>
            <person name="Muraki A."/>
            <person name="Nakayama S."/>
            <person name="Nakazaki N."/>
            <person name="Naruo K."/>
            <person name="Okumura S."/>
            <person name="Shinpo S."/>
            <person name="Takeuchi C."/>
            <person name="Wada T."/>
            <person name="Watanabe A."/>
            <person name="Yamada M."/>
            <person name="Yasuda M."/>
            <person name="Sato S."/>
            <person name="de la Bastide M."/>
            <person name="Huang E."/>
            <person name="Spiegel L."/>
            <person name="Gnoj L."/>
            <person name="O'Shaughnessy A."/>
            <person name="Preston R."/>
            <person name="Habermann K."/>
            <person name="Murray J."/>
            <person name="Johnson D."/>
            <person name="Rohlfing T."/>
            <person name="Nelson J."/>
            <person name="Stoneking T."/>
            <person name="Pepin K."/>
            <person name="Spieth J."/>
            <person name="Sekhon M."/>
            <person name="Armstrong J."/>
            <person name="Becker M."/>
            <person name="Belter E."/>
            <person name="Cordum H."/>
            <person name="Cordes M."/>
            <person name="Courtney L."/>
            <person name="Courtney W."/>
            <person name="Dante M."/>
            <person name="Du H."/>
            <person name="Edwards J."/>
            <person name="Fryman J."/>
            <person name="Haakensen B."/>
            <person name="Lamar E."/>
            <person name="Latreille P."/>
            <person name="Leonard S."/>
            <person name="Meyer R."/>
            <person name="Mulvaney E."/>
            <person name="Ozersky P."/>
            <person name="Riley A."/>
            <person name="Strowmatt C."/>
            <person name="Wagner-McPherson C."/>
            <person name="Wollam A."/>
            <person name="Yoakum M."/>
            <person name="Bell M."/>
            <person name="Dedhia N."/>
            <person name="Parnell L."/>
            <person name="Shah R."/>
            <person name="Rodriguez M."/>
            <person name="Hoon See L."/>
            <person name="Vil D."/>
            <person name="Baker J."/>
            <person name="Kirchoff K."/>
            <person name="Toth K."/>
            <person name="King L."/>
            <person name="Bahret A."/>
            <person name="Miller B."/>
            <person name="Marra M.A."/>
            <person name="Martienssen R."/>
            <person name="McCombie W.R."/>
            <person name="Wilson R.K."/>
            <person name="Murphy G."/>
            <person name="Bancroft I."/>
            <person name="Volckaert G."/>
            <person name="Wambutt R."/>
            <person name="Duesterhoeft A."/>
            <person name="Stiekema W."/>
            <person name="Pohl T."/>
            <person name="Entian K.-D."/>
            <person name="Terryn N."/>
            <person name="Hartley N."/>
            <person name="Bent E."/>
            <person name="Johnson S."/>
            <person name="Langham S.-A."/>
            <person name="McCullagh B."/>
            <person name="Robben J."/>
            <person name="Grymonprez B."/>
            <person name="Zimmermann W."/>
            <person name="Ramsperger U."/>
            <person name="Wedler H."/>
            <person name="Balke K."/>
            <person name="Wedler E."/>
            <person name="Peters S."/>
            <person name="van Staveren M."/>
            <person name="Dirkse W."/>
            <person name="Mooijman P."/>
            <person name="Klein Lankhorst R."/>
            <person name="Weitzenegger T."/>
            <person name="Bothe G."/>
            <person name="Rose M."/>
            <person name="Hauf J."/>
            <person name="Berneiser S."/>
            <person name="Hempel S."/>
            <person name="Feldpausch M."/>
            <person name="Lamberth S."/>
            <person name="Villarroel R."/>
            <person name="Gielen J."/>
            <person name="Ardiles W."/>
            <person name="Bents O."/>
            <person name="Lemcke K."/>
            <person name="Kolesov G."/>
            <person name="Mayer K.F.X."/>
            <person name="Rudd S."/>
            <person name="Schoof H."/>
            <person name="Schueller C."/>
            <person name="Zaccaria P."/>
            <person name="Mewes H.-W."/>
            <person name="Bevan M."/>
            <person name="Fransz P.F."/>
        </authorList>
    </citation>
    <scope>NUCLEOTIDE SEQUENCE [LARGE SCALE GENOMIC DNA]</scope>
    <source>
        <strain>cv. Columbia</strain>
    </source>
</reference>
<reference key="2">
    <citation type="journal article" date="2017" name="Plant J.">
        <title>Araport11: a complete reannotation of the Arabidopsis thaliana reference genome.</title>
        <authorList>
            <person name="Cheng C.Y."/>
            <person name="Krishnakumar V."/>
            <person name="Chan A.P."/>
            <person name="Thibaud-Nissen F."/>
            <person name="Schobel S."/>
            <person name="Town C.D."/>
        </authorList>
    </citation>
    <scope>GENOME REANNOTATION</scope>
    <source>
        <strain>cv. Columbia</strain>
    </source>
</reference>
<reference key="3">
    <citation type="submission" date="2005-05" db="EMBL/GenBank/DDBJ databases">
        <title>Arabidopsis ORF Clones.</title>
        <authorList>
            <person name="Kim C.J."/>
            <person name="Chen H."/>
            <person name="Cheuk R."/>
            <person name="Shinn P."/>
            <person name="Ecker J.R."/>
        </authorList>
    </citation>
    <scope>NUCLEOTIDE SEQUENCE [LARGE SCALE MRNA]</scope>
    <source>
        <strain>cv. Columbia</strain>
    </source>
</reference>
<feature type="chain" id="PRO_0000395210" description="Flotillin-like protein 2">
    <location>
        <begin position="1"/>
        <end position="463"/>
    </location>
</feature>
<feature type="coiled-coil region" evidence="2">
    <location>
        <begin position="305"/>
        <end position="354"/>
    </location>
</feature>
<feature type="lipid moiety-binding region" description="S-palmitoyl cysteine" evidence="2">
    <location>
        <position position="35"/>
    </location>
</feature>
<dbReference type="EMBL" id="AC006259">
    <property type="status" value="NOT_ANNOTATED_CDS"/>
    <property type="molecule type" value="Genomic_DNA"/>
</dbReference>
<dbReference type="EMBL" id="CP002688">
    <property type="protein sequence ID" value="AED93418.1"/>
    <property type="molecule type" value="Genomic_DNA"/>
</dbReference>
<dbReference type="EMBL" id="BT023420">
    <property type="protein sequence ID" value="AAY56411.1"/>
    <property type="molecule type" value="mRNA"/>
</dbReference>
<dbReference type="RefSeq" id="NP_197908.1">
    <property type="nucleotide sequence ID" value="NM_122435.5"/>
</dbReference>
<dbReference type="SMR" id="Q4V3D6"/>
<dbReference type="BioGRID" id="17872">
    <property type="interactions" value="10"/>
</dbReference>
<dbReference type="FunCoup" id="Q4V3D6">
    <property type="interactions" value="73"/>
</dbReference>
<dbReference type="IntAct" id="Q4V3D6">
    <property type="interactions" value="10"/>
</dbReference>
<dbReference type="STRING" id="3702.Q4V3D6"/>
<dbReference type="PaxDb" id="3702-AT5G25260.1"/>
<dbReference type="ProteomicsDB" id="230037"/>
<dbReference type="EnsemblPlants" id="AT5G25260.1">
    <property type="protein sequence ID" value="AT5G25260.1"/>
    <property type="gene ID" value="AT5G25260"/>
</dbReference>
<dbReference type="GeneID" id="832597"/>
<dbReference type="Gramene" id="AT5G25260.1">
    <property type="protein sequence ID" value="AT5G25260.1"/>
    <property type="gene ID" value="AT5G25260"/>
</dbReference>
<dbReference type="KEGG" id="ath:AT5G25260"/>
<dbReference type="Araport" id="AT5G25260"/>
<dbReference type="TAIR" id="AT5G25260">
    <property type="gene designation" value="FLOT2"/>
</dbReference>
<dbReference type="eggNOG" id="KOG2668">
    <property type="taxonomic scope" value="Eukaryota"/>
</dbReference>
<dbReference type="HOGENOM" id="CLU_030844_1_1_1"/>
<dbReference type="InParanoid" id="Q4V3D6"/>
<dbReference type="OMA" id="IWNTTNE"/>
<dbReference type="PhylomeDB" id="Q4V3D6"/>
<dbReference type="PRO" id="PR:Q4V3D6"/>
<dbReference type="Proteomes" id="UP000006548">
    <property type="component" value="Chromosome 5"/>
</dbReference>
<dbReference type="ExpressionAtlas" id="Q4V3D6">
    <property type="expression patterns" value="baseline and differential"/>
</dbReference>
<dbReference type="GO" id="GO:0005901">
    <property type="term" value="C:caveola"/>
    <property type="evidence" value="ECO:0007669"/>
    <property type="project" value="UniProtKB-SubCell"/>
</dbReference>
<dbReference type="GO" id="GO:0000325">
    <property type="term" value="C:plant-type vacuole"/>
    <property type="evidence" value="ECO:0007005"/>
    <property type="project" value="TAIR"/>
</dbReference>
<dbReference type="GO" id="GO:0044853">
    <property type="term" value="C:plasma membrane raft"/>
    <property type="evidence" value="ECO:0000314"/>
    <property type="project" value="TAIR"/>
</dbReference>
<dbReference type="GO" id="GO:0009536">
    <property type="term" value="C:plastid"/>
    <property type="evidence" value="ECO:0007005"/>
    <property type="project" value="TAIR"/>
</dbReference>
<dbReference type="CDD" id="cd03399">
    <property type="entry name" value="SPFH_flotillin"/>
    <property type="match status" value="1"/>
</dbReference>
<dbReference type="FunFam" id="3.30.479.30:FF:000015">
    <property type="entry name" value="Flotillin-like protein 2"/>
    <property type="match status" value="1"/>
</dbReference>
<dbReference type="Gene3D" id="3.30.479.30">
    <property type="entry name" value="Band 7 domain"/>
    <property type="match status" value="1"/>
</dbReference>
<dbReference type="InterPro" id="IPR001107">
    <property type="entry name" value="Band_7"/>
</dbReference>
<dbReference type="InterPro" id="IPR036013">
    <property type="entry name" value="Band_7/SPFH_dom_sf"/>
</dbReference>
<dbReference type="InterPro" id="IPR027705">
    <property type="entry name" value="Flotillin_fam"/>
</dbReference>
<dbReference type="PANTHER" id="PTHR13806:SF31">
    <property type="entry name" value="FLOTILLIN-LIKE PROTEIN 1-RELATED"/>
    <property type="match status" value="1"/>
</dbReference>
<dbReference type="PANTHER" id="PTHR13806">
    <property type="entry name" value="FLOTILLIN-RELATED"/>
    <property type="match status" value="1"/>
</dbReference>
<dbReference type="Pfam" id="PF01145">
    <property type="entry name" value="Band_7"/>
    <property type="match status" value="1"/>
</dbReference>
<dbReference type="SUPFAM" id="SSF117892">
    <property type="entry name" value="Band 7/SPFH domain"/>
    <property type="match status" value="1"/>
</dbReference>
<keyword id="KW-1003">Cell membrane</keyword>
<keyword id="KW-0175">Coiled coil</keyword>
<keyword id="KW-0449">Lipoprotein</keyword>
<keyword id="KW-0472">Membrane</keyword>
<keyword id="KW-0564">Palmitate</keyword>
<keyword id="KW-1185">Reference proteome</keyword>
<accession>Q4V3D6</accession>
<protein>
    <recommendedName>
        <fullName>Flotillin-like protein 2</fullName>
    </recommendedName>
    <alternativeName>
        <fullName>Nodulin-like protein 2</fullName>
    </alternativeName>
</protein>